<dbReference type="EMBL" id="AF061642">
    <property type="protein sequence ID" value="AAC29065.1"/>
    <property type="molecule type" value="Genomic_DNA"/>
</dbReference>
<dbReference type="SASBDB" id="O89943"/>
<dbReference type="SMR" id="O89943"/>
<dbReference type="Proteomes" id="UP000135013">
    <property type="component" value="Segment"/>
</dbReference>
<dbReference type="GO" id="GO:0005576">
    <property type="term" value="C:extracellular region"/>
    <property type="evidence" value="ECO:0007669"/>
    <property type="project" value="UniProtKB-SubCell"/>
</dbReference>
<dbReference type="GO" id="GO:0030430">
    <property type="term" value="C:host cell cytoplasm"/>
    <property type="evidence" value="ECO:0007669"/>
    <property type="project" value="UniProtKB-SubCell"/>
</dbReference>
<dbReference type="GO" id="GO:0044196">
    <property type="term" value="C:host cell nucleolus"/>
    <property type="evidence" value="ECO:0007669"/>
    <property type="project" value="UniProtKB-SubCell"/>
</dbReference>
<dbReference type="GO" id="GO:0042805">
    <property type="term" value="F:actinin binding"/>
    <property type="evidence" value="ECO:0007669"/>
    <property type="project" value="UniProtKB-UniRule"/>
</dbReference>
<dbReference type="GO" id="GO:0030332">
    <property type="term" value="F:cyclin binding"/>
    <property type="evidence" value="ECO:0007669"/>
    <property type="project" value="UniProtKB-UniRule"/>
</dbReference>
<dbReference type="GO" id="GO:0046872">
    <property type="term" value="F:metal ion binding"/>
    <property type="evidence" value="ECO:0007669"/>
    <property type="project" value="UniProtKB-UniRule"/>
</dbReference>
<dbReference type="GO" id="GO:0019904">
    <property type="term" value="F:protein domain specific binding"/>
    <property type="evidence" value="ECO:0007669"/>
    <property type="project" value="UniProtKB-UniRule"/>
</dbReference>
<dbReference type="GO" id="GO:0004865">
    <property type="term" value="F:protein serine/threonine phosphatase inhibitor activity"/>
    <property type="evidence" value="ECO:0007669"/>
    <property type="project" value="UniProtKB-KW"/>
</dbReference>
<dbReference type="GO" id="GO:0001070">
    <property type="term" value="F:RNA-binding transcription regulator activity"/>
    <property type="evidence" value="ECO:0007669"/>
    <property type="project" value="UniProtKB-UniRule"/>
</dbReference>
<dbReference type="GO" id="GO:1990970">
    <property type="term" value="F:trans-activation response element binding"/>
    <property type="evidence" value="ECO:0007669"/>
    <property type="project" value="UniProtKB-UniRule"/>
</dbReference>
<dbReference type="GO" id="GO:0006351">
    <property type="term" value="P:DNA-templated transcription"/>
    <property type="evidence" value="ECO:0007669"/>
    <property type="project" value="UniProtKB-UniRule"/>
</dbReference>
<dbReference type="GO" id="GO:0032968">
    <property type="term" value="P:positive regulation of transcription elongation by RNA polymerase II"/>
    <property type="evidence" value="ECO:0007669"/>
    <property type="project" value="UniProtKB-UniRule"/>
</dbReference>
<dbReference type="GO" id="GO:0050434">
    <property type="term" value="P:positive regulation of viral transcription"/>
    <property type="evidence" value="ECO:0007669"/>
    <property type="project" value="UniProtKB-UniRule"/>
</dbReference>
<dbReference type="GO" id="GO:0039525">
    <property type="term" value="P:symbiont-mediated perturbation of host chromatin organization"/>
    <property type="evidence" value="ECO:0007669"/>
    <property type="project" value="UniProtKB-UniRule"/>
</dbReference>
<dbReference type="GO" id="GO:0052170">
    <property type="term" value="P:symbiont-mediated suppression of host innate immune response"/>
    <property type="evidence" value="ECO:0007669"/>
    <property type="project" value="UniProtKB-KW"/>
</dbReference>
<dbReference type="GO" id="GO:0039606">
    <property type="term" value="P:symbiont-mediated suppression of host translation initiation"/>
    <property type="evidence" value="ECO:0007669"/>
    <property type="project" value="UniProtKB-KW"/>
</dbReference>
<dbReference type="GO" id="GO:0039502">
    <property type="term" value="P:symbiont-mediated suppression of host type I interferon-mediated signaling pathway"/>
    <property type="evidence" value="ECO:0007669"/>
    <property type="project" value="UniProtKB-UniRule"/>
</dbReference>
<dbReference type="Gene3D" id="4.10.20.10">
    <property type="entry name" value="Tat domain"/>
    <property type="match status" value="1"/>
</dbReference>
<dbReference type="HAMAP" id="MF_04079">
    <property type="entry name" value="HIV_TAT"/>
    <property type="match status" value="1"/>
</dbReference>
<dbReference type="InterPro" id="IPR001831">
    <property type="entry name" value="IV_Tat"/>
</dbReference>
<dbReference type="InterPro" id="IPR036963">
    <property type="entry name" value="Tat_dom_sf"/>
</dbReference>
<dbReference type="Pfam" id="PF00539">
    <property type="entry name" value="Tat"/>
    <property type="match status" value="1"/>
</dbReference>
<dbReference type="PRINTS" id="PR00055">
    <property type="entry name" value="HIVTATDOMAIN"/>
</dbReference>
<gene>
    <name evidence="1" type="primary">tat</name>
</gene>
<name>TAT_HV1SE</name>
<proteinExistence type="inferred from homology"/>
<feature type="chain" id="PRO_0000244855" description="Protein Tat">
    <location>
        <begin position="1"/>
        <end position="101"/>
    </location>
</feature>
<feature type="region of interest" description="Transactivation" evidence="1">
    <location>
        <begin position="1"/>
        <end position="48"/>
    </location>
</feature>
<feature type="region of interest" description="Interaction with human CREBBP" evidence="1">
    <location>
        <begin position="1"/>
        <end position="24"/>
    </location>
</feature>
<feature type="region of interest" description="Cysteine-rich" evidence="1">
    <location>
        <begin position="22"/>
        <end position="37"/>
    </location>
</feature>
<feature type="region of interest" description="Core" evidence="1">
    <location>
        <begin position="38"/>
        <end position="48"/>
    </location>
</feature>
<feature type="region of interest" description="Disordered" evidence="2">
    <location>
        <begin position="48"/>
        <end position="101"/>
    </location>
</feature>
<feature type="region of interest" description="Interaction with the host capping enzyme RNGTT" evidence="1">
    <location>
        <begin position="49"/>
        <end position="86"/>
    </location>
</feature>
<feature type="short sequence motif" description="Nuclear localization signal, RNA-binding (TAR), and protein transduction" evidence="1">
    <location>
        <begin position="49"/>
        <end position="57"/>
    </location>
</feature>
<feature type="compositionally biased region" description="Basic residues" evidence="2">
    <location>
        <begin position="48"/>
        <end position="57"/>
    </location>
</feature>
<feature type="compositionally biased region" description="Basic and acidic residues" evidence="2">
    <location>
        <begin position="85"/>
        <end position="101"/>
    </location>
</feature>
<feature type="binding site" evidence="1">
    <location>
        <position position="22"/>
    </location>
    <ligand>
        <name>Zn(2+)</name>
        <dbReference type="ChEBI" id="CHEBI:29105"/>
        <label>1</label>
    </ligand>
</feature>
<feature type="binding site" evidence="1">
    <location>
        <position position="25"/>
    </location>
    <ligand>
        <name>Zn(2+)</name>
        <dbReference type="ChEBI" id="CHEBI:29105"/>
        <label>2</label>
    </ligand>
</feature>
<feature type="binding site" evidence="1">
    <location>
        <position position="27"/>
    </location>
    <ligand>
        <name>Zn(2+)</name>
        <dbReference type="ChEBI" id="CHEBI:29105"/>
        <label>2</label>
    </ligand>
</feature>
<feature type="binding site" evidence="1">
    <location>
        <position position="30"/>
    </location>
    <ligand>
        <name>Zn(2+)</name>
        <dbReference type="ChEBI" id="CHEBI:29105"/>
        <label>2</label>
    </ligand>
</feature>
<feature type="binding site" evidence="1">
    <location>
        <position position="33"/>
    </location>
    <ligand>
        <name>Zn(2+)</name>
        <dbReference type="ChEBI" id="CHEBI:29105"/>
        <label>1</label>
    </ligand>
</feature>
<feature type="binding site" evidence="1">
    <location>
        <position position="34"/>
    </location>
    <ligand>
        <name>Zn(2+)</name>
        <dbReference type="ChEBI" id="CHEBI:29105"/>
        <label>1</label>
    </ligand>
</feature>
<feature type="binding site" evidence="1">
    <location>
        <position position="37"/>
    </location>
    <ligand>
        <name>Zn(2+)</name>
        <dbReference type="ChEBI" id="CHEBI:29105"/>
        <label>1</label>
    </ligand>
</feature>
<feature type="site" description="Essential for Tat translocation through the endosomal membrane" evidence="1">
    <location>
        <position position="11"/>
    </location>
</feature>
<feature type="modified residue" description="N6-acetyllysine; by host PCAF" evidence="1">
    <location>
        <position position="28"/>
    </location>
</feature>
<feature type="modified residue" description="N6-acetyllysine; by host EP300 and GCN5L2" evidence="1">
    <location>
        <position position="50"/>
    </location>
</feature>
<feature type="modified residue" description="N6-acetyllysine; by host EP300 and GCN5L2" evidence="1">
    <location>
        <position position="51"/>
    </location>
</feature>
<feature type="modified residue" description="Asymmetric dimethylarginine; by host PRMT6" evidence="1">
    <location>
        <position position="52"/>
    </location>
</feature>
<feature type="cross-link" description="Glycyl lysine isopeptide (Lys-Gly) (interchain with G-Cter in ubiquitin)" evidence="1">
    <location>
        <position position="71"/>
    </location>
</feature>
<feature type="splice variant" id="VSP_022424" description="In isoform Short.">
    <location>
        <begin position="73"/>
        <end position="101"/>
    </location>
</feature>
<organismHost>
    <name type="scientific">Homo sapiens</name>
    <name type="common">Human</name>
    <dbReference type="NCBI Taxonomy" id="9606"/>
</organismHost>
<evidence type="ECO:0000255" key="1">
    <source>
        <dbReference type="HAMAP-Rule" id="MF_04079"/>
    </source>
</evidence>
<evidence type="ECO:0000256" key="2">
    <source>
        <dbReference type="SAM" id="MobiDB-lite"/>
    </source>
</evidence>
<evidence type="ECO:0000305" key="3"/>
<comment type="function">
    <text evidence="1">Transcriptional activator that increases RNA Pol II processivity, thereby increasing the level of full-length viral transcripts. Recognizes a hairpin structure at the 5'-LTR of the nascent viral mRNAs referred to as the transactivation responsive RNA element (TAR) and recruits the cyclin T1-CDK9 complex (P-TEFb complex) that will in turn hyperphosphorylate the RNA polymerase II to allow efficient elongation. The CDK9 component of P-TEFb and other Tat-activated kinases hyperphosphorylate the C-terminus of RNA Pol II that becomes stabilized and much more processive. Other factors such as HTATSF1/Tat-SF1, SUPT5H/SPT5, and HTATIP2 are also important for Tat's function. Besides its effect on RNA Pol II processivity, Tat induces chromatin remodeling of proviral genes by recruiting the histone acetyltransferases (HATs) CREBBP, EP300 and PCAF to the chromatin. This also contributes to the increase in proviral transcription rate, especially when the provirus integrates in transcriptionally silent region of the host genome. To ensure maximal activation of the LTR, Tat mediates nuclear translocation of NF-kappa-B by interacting with host RELA. Through its interaction with host TBP, Tat may also modulate transcription initiation. Tat can reactivate a latently infected cell by penetrating in it and transactivating its LTR promoter. In the cytoplasm, Tat is thought to act as a translational activator of HIV-1 mRNAs.</text>
</comment>
<comment type="function">
    <text evidence="1">Extracellular circulating Tat can be endocytosed by surrounding uninfected cells via the binding to several surface receptors such as CD26, CXCR4, heparan sulfate proteoglycans (HSPG) or LDLR. Neurons are rarely infected, but they internalize Tat via their LDLR. Through its interaction with nuclear HATs, Tat is potentially able to control the acetylation-dependent cellular gene expression. Modulates the expression of many cellular genes involved in cell survival, proliferation or in coding for cytokines or cytokine receptors. Tat plays a role in T-cell and neurons apoptosis. Tat induced neurotoxicity and apoptosis probably contribute to neuroAIDS. Circulating Tat also acts as a chemokine-like and/or growth factor-like molecule that binds to specific receptors on the surface of the cells, affecting many cellular pathways. In the vascular system, Tat binds to ITGAV/ITGB3 and ITGA5/ITGB1 integrins dimers at the surface of endothelial cells and competes with bFGF for heparin-binding sites, leading to an excess of soluble bFGF.</text>
</comment>
<comment type="subunit">
    <text evidence="1">Interacts with host CCNT1. Associates with the P-TEFb complex composed at least of Tat, P-TEFb (CDK9 and CCNT1), TAR RNA, RNA Pol II. Recruits the HATs CREBBP, TAF1/TFIID, EP300, PCAF and GCN5L2. Interacts with host KAT5/Tip60; this interaction targets the latter to degradation. Interacts with the host deacetylase SIRT1. Interacts with host capping enzyme RNGTT; this interaction stimulates RNGTT. Binds to host KDR, and to the host integrins ITGAV/ITGB3 and ITGA5/ITGB1. Interacts with host KPNB1/importin beta-1 without previous binding to KPNA1/importin alpha-1. Interacts with EIF2AK2. Interacts with host nucleosome assembly protein NAP1L1; this interaction may be required for the transport of Tat within the nucleus, since the two proteins interact at the nuclear rim. Interacts with host C1QBP/SF2P32; this interaction involves lysine-acetylated Tat. Interacts with the host chemokine receptors CCR2, CCR3 and CXCR4. Interacts with host DPP4/CD26; this interaction may trigger an anti-proliferative effect. Interacts with host LDLR. Interacts with the host extracellular matrix metalloproteinase MMP1. Interacts with host PRMT6; this interaction mediates Tat's methylation. Interacts with, and is ubiquitinated by MDM2/Hdm2. Interacts with host PSMC3 and HTATIP2. Interacts with STAB1; this interaction may overcome SATB1-mediated repression of IL2 and IL2RA (interleukin) in T cells by binding to the same domain than HDAC1. Interacts (when acetylated) with human CDK13, thereby increasing HIV-1 mRNA splicing and promoting the production of the doubly spliced HIV-1 protein Nef. Interacts with host TBP; this interaction modulates the activity of transcriptional pre-initiation complex. Interacts with host RELA. Interacts with host PLSCR1; this interaction negatively regulates Tat transactivation activity by altering its subcellular distribution.</text>
</comment>
<comment type="subcellular location">
    <subcellularLocation>
        <location evidence="1">Host nucleus</location>
        <location evidence="1">Host nucleolus</location>
    </subcellularLocation>
    <subcellularLocation>
        <location evidence="1">Host cytoplasm</location>
    </subcellularLocation>
    <subcellularLocation>
        <location evidence="1">Secreted</location>
    </subcellularLocation>
    <text evidence="1">Probably localizes to both nuclear and nucleolar compartments. Nuclear localization is mediated through the interaction of the nuclear localization signal with importin KPNB1. Secretion occurs through a Golgi-independent pathway. Tat is released from infected cells to the extracellular space where it remains associated to the cell membrane, or is secreted into the cerebrospinal fluid and sera. Extracellular Tat can be endocytosed by surrounding uninfected cells via binding to several receptors depending on the cell type.</text>
</comment>
<comment type="alternative products">
    <event type="alternative splicing"/>
    <isoform>
        <id>O89943-1</id>
        <name>Long</name>
        <sequence type="displayed"/>
    </isoform>
    <isoform>
        <id>O89943-2</id>
        <name>Short</name>
        <sequence type="described" ref="VSP_022424"/>
    </isoform>
</comment>
<comment type="domain">
    <text evidence="1">The cell attachment site mediates the interaction with ITGAV/ITGB3 and ITGA5/ITGB1 integrins, leading to vascular cell migration and invasion. This interaction also provides endothelial cells with the adhesion signal they require to grow in response to mitogens.</text>
</comment>
<comment type="domain">
    <text evidence="1">The Cys-rich region may bind 2 zinc ions. This region is involved in binding to KAT5.</text>
</comment>
<comment type="domain">
    <text evidence="1">The transactivation domain mediates the interaction with CCNT1, GCN5L2, and MDM2.</text>
</comment>
<comment type="domain">
    <text evidence="1">The Arg-rich RNA-binding region binds the TAR RNA. This region also mediates the nuclear localization through direct binding to KPNB1 and is involved in Tat's transfer across cell membranes (protein transduction). The same region is required for the interaction with EP300, PCAF, EIF2AK2 and KDR.</text>
</comment>
<comment type="PTM">
    <text evidence="1">Asymmetrical arginine methylation by host PRMT6 seems to diminish the transactivation capacity of Tat and affects the interaction with host CCNT1.</text>
</comment>
<comment type="PTM">
    <text evidence="1">Acetylation by EP300, CREBBP, GCN5L2/GCN5 and PCAF regulates the transactivation activity of Tat. EP300-mediated acetylation of Lys-50 promotes dissociation of Tat from the TAR RNA through the competitive binding to PCAF's bromodomain. In addition, the non-acetylated Tat's N-terminus can also interact with PCAF. PCAF-mediated acetylation of Lys-28 enhances Tat's binding to CCNT1. Lys-50 is deacetylated by SIRT1.</text>
</comment>
<comment type="PTM">
    <text evidence="1">Polyubiquitination by host MDM2 does not target Tat to degradation, but activates its transactivation function and fosters interaction with CCNT1 and TAR RNA.</text>
</comment>
<comment type="PTM">
    <text evidence="1">Phosphorylated by EIF2AK2 on serine and threonine residues adjacent to the basic region important for TAR RNA binding and function. Phosphorylation of Tat by EIF2AK2 is dependent on the prior activation of EIF2AK2 by dsRNA.</text>
</comment>
<comment type="miscellaneous">
    <text evidence="1">HIV-1 lineages are divided in three main groups, M (for Major), O (for Outlier), and N (for New, or Non-M, Non-O). The vast majority of strains found worldwide belong to the group M. Group O seems to be endemic to and largely confined to Cameroon and neighboring countries in West Central Africa, where these viruses represent a small minority of HIV-1 strains. The group N is represented by a limited number of isolates from Cameroonian persons. The group M is further subdivided in 9 clades or subtypes (A to D, F to H, J and K).</text>
</comment>
<comment type="miscellaneous">
    <molecule>Isoform Short</molecule>
    <text evidence="3">Expressed in the late stage of the infection cycle, when unspliced viral RNAs are exported to the cytoplasm by the viral Rev protein.</text>
</comment>
<comment type="similarity">
    <text evidence="1">Belongs to the lentiviruses Tat family.</text>
</comment>
<reference key="1">
    <citation type="journal article" date="1998" name="Virology">
        <title>Full genome sequences of human immunodeficiency virus type 1 subtypes G and A/G intersubtype recombinants.</title>
        <authorList>
            <person name="Carr J.K."/>
            <person name="Salminen M.O."/>
            <person name="Albert J."/>
            <person name="Sanders-Buell E."/>
            <person name="Gotte D."/>
            <person name="Birx D.L."/>
            <person name="McCutchan F.E."/>
        </authorList>
    </citation>
    <scope>NUCLEOTIDE SEQUENCE [GENOMIC DNA]</scope>
</reference>
<reference key="2">
    <citation type="journal article" date="2005" name="Microbes Infect.">
        <title>Decoding Tat: the biology of HIV Tat posttranslational modifications.</title>
        <authorList>
            <person name="Hetzer C."/>
            <person name="Dormeyer W."/>
            <person name="Schnolzer M."/>
            <person name="Ott M."/>
        </authorList>
    </citation>
    <scope>REVIEW</scope>
    <scope>ALTERNATIVE SPLICING</scope>
</reference>
<reference key="3">
    <citation type="journal article" date="2006" name="Front. Biosci.">
        <title>The multiple functions of HIV-1 Tat: proliferation versus apoptosis.</title>
        <authorList>
            <person name="Peruzzi F."/>
        </authorList>
    </citation>
    <scope>REVIEW</scope>
</reference>
<reference key="4">
    <citation type="journal article" date="2006" name="Microbes Infect.">
        <title>HIV tat and neurotoxicity.</title>
        <authorList>
            <person name="King J.E."/>
            <person name="Eugenin E.A."/>
            <person name="Buckner C.M."/>
            <person name="Berman J.W."/>
        </authorList>
    </citation>
    <scope>REVIEW</scope>
</reference>
<accession>O89943</accession>
<keyword id="KW-0007">Acetylation</keyword>
<keyword id="KW-0010">Activator</keyword>
<keyword id="KW-0014">AIDS</keyword>
<keyword id="KW-0025">Alternative splicing</keyword>
<keyword id="KW-0053">Apoptosis</keyword>
<keyword id="KW-1035">Host cytoplasm</keyword>
<keyword id="KW-1048">Host nucleus</keyword>
<keyword id="KW-0945">Host-virus interaction</keyword>
<keyword id="KW-1090">Inhibition of host innate immune response by virus</keyword>
<keyword id="KW-1114">Inhibition of host interferon signaling pathway by virus</keyword>
<keyword id="KW-0922">Interferon antiviral system evasion</keyword>
<keyword id="KW-1017">Isopeptide bond</keyword>
<keyword id="KW-0479">Metal-binding</keyword>
<keyword id="KW-0488">Methylation</keyword>
<keyword id="KW-1122">Modulation of host chromatin by virus</keyword>
<keyword id="KW-1126">Modulation of host PP1 activity by virus</keyword>
<keyword id="KW-0597">Phosphoprotein</keyword>
<keyword id="KW-0694">RNA-binding</keyword>
<keyword id="KW-0964">Secreted</keyword>
<keyword id="KW-0804">Transcription</keyword>
<keyword id="KW-0805">Transcription regulation</keyword>
<keyword id="KW-0832">Ubl conjugation</keyword>
<keyword id="KW-0899">Viral immunoevasion</keyword>
<keyword id="KW-0862">Zinc</keyword>
<organism>
    <name type="scientific">Human immunodeficiency virus type 1 group M subtype G (isolate SE6165)</name>
    <name type="common">HIV-1</name>
    <dbReference type="NCBI Taxonomy" id="388824"/>
    <lineage>
        <taxon>Viruses</taxon>
        <taxon>Riboviria</taxon>
        <taxon>Pararnavirae</taxon>
        <taxon>Artverviricota</taxon>
        <taxon>Revtraviricetes</taxon>
        <taxon>Ortervirales</taxon>
        <taxon>Retroviridae</taxon>
        <taxon>Orthoretrovirinae</taxon>
        <taxon>Lentivirus</taxon>
        <taxon>Human immunodeficiency virus type 1</taxon>
    </lineage>
</organism>
<sequence>MDPVDPNLEPWNHPGSQPKTPCNKCFCKVCCWHCQVCFLNKGLGISYGRKKRKHRRGTPQSSKGHQDPVPKQPLPTTRGNPTGPKESKKEVASKAEADQCD</sequence>
<protein>
    <recommendedName>
        <fullName evidence="1">Protein Tat</fullName>
    </recommendedName>
    <alternativeName>
        <fullName evidence="1">Transactivating regulatory protein</fullName>
    </alternativeName>
</protein>